<accession>B3QIN8</accession>
<name>SSUD_RHOPT</name>
<comment type="function">
    <text evidence="1">Catalyzes the desulfonation of aliphatic sulfonates.</text>
</comment>
<comment type="catalytic activity">
    <reaction evidence="1">
        <text>an alkanesulfonate + FMNH2 + O2 = an aldehyde + FMN + sulfite + H2O + 2 H(+)</text>
        <dbReference type="Rhea" id="RHEA:23064"/>
        <dbReference type="ChEBI" id="CHEBI:15377"/>
        <dbReference type="ChEBI" id="CHEBI:15378"/>
        <dbReference type="ChEBI" id="CHEBI:15379"/>
        <dbReference type="ChEBI" id="CHEBI:17359"/>
        <dbReference type="ChEBI" id="CHEBI:17478"/>
        <dbReference type="ChEBI" id="CHEBI:57618"/>
        <dbReference type="ChEBI" id="CHEBI:58210"/>
        <dbReference type="ChEBI" id="CHEBI:134249"/>
        <dbReference type="EC" id="1.14.14.5"/>
    </reaction>
</comment>
<comment type="similarity">
    <text evidence="1">Belongs to the SsuD family.</text>
</comment>
<organism>
    <name type="scientific">Rhodopseudomonas palustris (strain TIE-1)</name>
    <dbReference type="NCBI Taxonomy" id="395960"/>
    <lineage>
        <taxon>Bacteria</taxon>
        <taxon>Pseudomonadati</taxon>
        <taxon>Pseudomonadota</taxon>
        <taxon>Alphaproteobacteria</taxon>
        <taxon>Hyphomicrobiales</taxon>
        <taxon>Nitrobacteraceae</taxon>
        <taxon>Rhodopseudomonas</taxon>
    </lineage>
</organism>
<dbReference type="EC" id="1.14.14.5" evidence="1"/>
<dbReference type="EMBL" id="CP001096">
    <property type="protein sequence ID" value="ACF01391.1"/>
    <property type="molecule type" value="Genomic_DNA"/>
</dbReference>
<dbReference type="RefSeq" id="WP_012496054.1">
    <property type="nucleotide sequence ID" value="NC_011004.1"/>
</dbReference>
<dbReference type="SMR" id="B3QIN8"/>
<dbReference type="KEGG" id="rpt:Rpal_2883"/>
<dbReference type="HOGENOM" id="CLU_027853_1_0_5"/>
<dbReference type="OrthoDB" id="9814695at2"/>
<dbReference type="Proteomes" id="UP000001725">
    <property type="component" value="Chromosome"/>
</dbReference>
<dbReference type="GO" id="GO:0008726">
    <property type="term" value="F:alkanesulfonate monooxygenase activity"/>
    <property type="evidence" value="ECO:0007669"/>
    <property type="project" value="UniProtKB-UniRule"/>
</dbReference>
<dbReference type="GO" id="GO:0046306">
    <property type="term" value="P:alkanesulfonate catabolic process"/>
    <property type="evidence" value="ECO:0007669"/>
    <property type="project" value="TreeGrafter"/>
</dbReference>
<dbReference type="CDD" id="cd01094">
    <property type="entry name" value="Alkanesulfonate_monoxygenase"/>
    <property type="match status" value="1"/>
</dbReference>
<dbReference type="Gene3D" id="3.20.20.30">
    <property type="entry name" value="Luciferase-like domain"/>
    <property type="match status" value="1"/>
</dbReference>
<dbReference type="HAMAP" id="MF_01229">
    <property type="entry name" value="Alkanesulf_monooxygen"/>
    <property type="match status" value="1"/>
</dbReference>
<dbReference type="InterPro" id="IPR019911">
    <property type="entry name" value="Alkanesulphonate_mOase_FMN-dep"/>
</dbReference>
<dbReference type="InterPro" id="IPR011251">
    <property type="entry name" value="Luciferase-like_dom"/>
</dbReference>
<dbReference type="InterPro" id="IPR036661">
    <property type="entry name" value="Luciferase-like_sf"/>
</dbReference>
<dbReference type="InterPro" id="IPR050172">
    <property type="entry name" value="SsuD_RutA_monooxygenase"/>
</dbReference>
<dbReference type="NCBIfam" id="TIGR03565">
    <property type="entry name" value="alk_sulf_monoox"/>
    <property type="match status" value="1"/>
</dbReference>
<dbReference type="NCBIfam" id="NF001939">
    <property type="entry name" value="PRK00719.1"/>
    <property type="match status" value="1"/>
</dbReference>
<dbReference type="PANTHER" id="PTHR42847">
    <property type="entry name" value="ALKANESULFONATE MONOOXYGENASE"/>
    <property type="match status" value="1"/>
</dbReference>
<dbReference type="PANTHER" id="PTHR42847:SF4">
    <property type="entry name" value="ALKANESULFONATE MONOOXYGENASE-RELATED"/>
    <property type="match status" value="1"/>
</dbReference>
<dbReference type="Pfam" id="PF00296">
    <property type="entry name" value="Bac_luciferase"/>
    <property type="match status" value="1"/>
</dbReference>
<dbReference type="SUPFAM" id="SSF51679">
    <property type="entry name" value="Bacterial luciferase-like"/>
    <property type="match status" value="1"/>
</dbReference>
<protein>
    <recommendedName>
        <fullName evidence="1">Alkanesulfonate monooxygenase</fullName>
        <ecNumber evidence="1">1.14.14.5</ecNumber>
    </recommendedName>
    <alternativeName>
        <fullName evidence="1">FMNH2-dependent aliphatic sulfonate monooxygenase</fullName>
    </alternativeName>
</protein>
<reference key="1">
    <citation type="submission" date="2008-05" db="EMBL/GenBank/DDBJ databases">
        <title>Complete sequence of Rhodopseudomonas palustris TIE-1.</title>
        <authorList>
            <consortium name="US DOE Joint Genome Institute"/>
            <person name="Lucas S."/>
            <person name="Copeland A."/>
            <person name="Lapidus A."/>
            <person name="Glavina del Rio T."/>
            <person name="Dalin E."/>
            <person name="Tice H."/>
            <person name="Pitluck S."/>
            <person name="Chain P."/>
            <person name="Malfatti S."/>
            <person name="Shin M."/>
            <person name="Vergez L."/>
            <person name="Lang D."/>
            <person name="Schmutz J."/>
            <person name="Larimer F."/>
            <person name="Land M."/>
            <person name="Hauser L."/>
            <person name="Kyrpides N."/>
            <person name="Mikhailova N."/>
            <person name="Emerson D."/>
            <person name="Newman D.K."/>
            <person name="Roden E."/>
            <person name="Richardson P."/>
        </authorList>
    </citation>
    <scope>NUCLEOTIDE SEQUENCE [LARGE SCALE GENOMIC DNA]</scope>
    <source>
        <strain>TIE-1</strain>
    </source>
</reference>
<keyword id="KW-0285">Flavoprotein</keyword>
<keyword id="KW-0288">FMN</keyword>
<keyword id="KW-0503">Monooxygenase</keyword>
<keyword id="KW-0560">Oxidoreductase</keyword>
<evidence type="ECO:0000255" key="1">
    <source>
        <dbReference type="HAMAP-Rule" id="MF_01229"/>
    </source>
</evidence>
<sequence length="391" mass="42441">MTAPQTPSSNFLWFLPTHGDGHYLGTSNGGRDVNFGYLRQIAQAADQLGYFGVLLPTGRSCEDSWVVASAVAPWTERLRYLVAVRPGLQSPSVAARMTATLDRVIGGRLLVNVVTGGDPVENKGDGVFLSHDERYEVTREFLNVYSDLLSGKTVNVAGKHITIEDGRLLFPPVQSPRPPLYFGGSSDAGIDVAADTVDKYLTWGEPPAQVAEKVNRVRAVAEQRGRKLSFGIRLHVIVRETNEAAWAAADDLIRYVTDDTIAAAQKVFARMDSVGQQRMSELHGGRRDKLEISPNLWAGVGLVRGGAGTALVGDPQTVAARIKEYQDVGIDTFILSGYPHLEEAYRFAELVFPLVKSLHAGNVTPLRANTGPFGETIANEHLPNAKQAVKP</sequence>
<proteinExistence type="inferred from homology"/>
<feature type="chain" id="PRO_1000139628" description="Alkanesulfonate monooxygenase">
    <location>
        <begin position="1"/>
        <end position="391"/>
    </location>
</feature>
<gene>
    <name evidence="1" type="primary">ssuD</name>
    <name type="ordered locus">Rpal_2883</name>
</gene>